<dbReference type="EC" id="2.7.11.-" evidence="1"/>
<dbReference type="EC" id="2.7.4.-" evidence="1"/>
<dbReference type="EMBL" id="AP006716">
    <property type="protein sequence ID" value="BAE05438.1"/>
    <property type="molecule type" value="Genomic_DNA"/>
</dbReference>
<dbReference type="RefSeq" id="WP_011276393.1">
    <property type="nucleotide sequence ID" value="NC_007168.1"/>
</dbReference>
<dbReference type="SMR" id="Q4L4I7"/>
<dbReference type="GeneID" id="93781452"/>
<dbReference type="KEGG" id="sha:SH2129"/>
<dbReference type="eggNOG" id="COG1493">
    <property type="taxonomic scope" value="Bacteria"/>
</dbReference>
<dbReference type="HOGENOM" id="CLU_052030_0_1_9"/>
<dbReference type="OrthoDB" id="9778803at2"/>
<dbReference type="Proteomes" id="UP000000543">
    <property type="component" value="Chromosome"/>
</dbReference>
<dbReference type="GO" id="GO:0005524">
    <property type="term" value="F:ATP binding"/>
    <property type="evidence" value="ECO:0007669"/>
    <property type="project" value="UniProtKB-UniRule"/>
</dbReference>
<dbReference type="GO" id="GO:0000287">
    <property type="term" value="F:magnesium ion binding"/>
    <property type="evidence" value="ECO:0007669"/>
    <property type="project" value="UniProtKB-UniRule"/>
</dbReference>
<dbReference type="GO" id="GO:0000155">
    <property type="term" value="F:phosphorelay sensor kinase activity"/>
    <property type="evidence" value="ECO:0007669"/>
    <property type="project" value="InterPro"/>
</dbReference>
<dbReference type="GO" id="GO:0004674">
    <property type="term" value="F:protein serine/threonine kinase activity"/>
    <property type="evidence" value="ECO:0007669"/>
    <property type="project" value="UniProtKB-KW"/>
</dbReference>
<dbReference type="GO" id="GO:0004712">
    <property type="term" value="F:protein serine/threonine/tyrosine kinase activity"/>
    <property type="evidence" value="ECO:0007669"/>
    <property type="project" value="UniProtKB-UniRule"/>
</dbReference>
<dbReference type="GO" id="GO:0006109">
    <property type="term" value="P:regulation of carbohydrate metabolic process"/>
    <property type="evidence" value="ECO:0007669"/>
    <property type="project" value="UniProtKB-UniRule"/>
</dbReference>
<dbReference type="CDD" id="cd01918">
    <property type="entry name" value="HprK_C"/>
    <property type="match status" value="1"/>
</dbReference>
<dbReference type="FunFam" id="3.40.1390.20:FF:000002">
    <property type="entry name" value="HPr kinase/phosphorylase"/>
    <property type="match status" value="1"/>
</dbReference>
<dbReference type="FunFam" id="3.40.50.300:FF:000174">
    <property type="entry name" value="HPr kinase/phosphorylase"/>
    <property type="match status" value="1"/>
</dbReference>
<dbReference type="Gene3D" id="3.40.1390.20">
    <property type="entry name" value="HprK N-terminal domain-like"/>
    <property type="match status" value="1"/>
</dbReference>
<dbReference type="Gene3D" id="3.40.50.300">
    <property type="entry name" value="P-loop containing nucleotide triphosphate hydrolases"/>
    <property type="match status" value="1"/>
</dbReference>
<dbReference type="HAMAP" id="MF_01249">
    <property type="entry name" value="HPr_kinase"/>
    <property type="match status" value="1"/>
</dbReference>
<dbReference type="InterPro" id="IPR003755">
    <property type="entry name" value="HPr(Ser)_kin/Pase"/>
</dbReference>
<dbReference type="InterPro" id="IPR011104">
    <property type="entry name" value="Hpr_kin/Pase_C"/>
</dbReference>
<dbReference type="InterPro" id="IPR011126">
    <property type="entry name" value="Hpr_kin/Pase_Hpr_N"/>
</dbReference>
<dbReference type="InterPro" id="IPR027417">
    <property type="entry name" value="P-loop_NTPase"/>
</dbReference>
<dbReference type="InterPro" id="IPR028979">
    <property type="entry name" value="Ser_kin/Pase_Hpr-like_N_sf"/>
</dbReference>
<dbReference type="NCBIfam" id="TIGR00679">
    <property type="entry name" value="hpr-ser"/>
    <property type="match status" value="1"/>
</dbReference>
<dbReference type="PANTHER" id="PTHR30305:SF1">
    <property type="entry name" value="HPR KINASE_PHOSPHORYLASE"/>
    <property type="match status" value="1"/>
</dbReference>
<dbReference type="PANTHER" id="PTHR30305">
    <property type="entry name" value="PROTEIN YJDM-RELATED"/>
    <property type="match status" value="1"/>
</dbReference>
<dbReference type="Pfam" id="PF07475">
    <property type="entry name" value="Hpr_kinase_C"/>
    <property type="match status" value="1"/>
</dbReference>
<dbReference type="Pfam" id="PF02603">
    <property type="entry name" value="Hpr_kinase_N"/>
    <property type="match status" value="1"/>
</dbReference>
<dbReference type="SUPFAM" id="SSF75138">
    <property type="entry name" value="HprK N-terminal domain-like"/>
    <property type="match status" value="1"/>
</dbReference>
<dbReference type="SUPFAM" id="SSF53795">
    <property type="entry name" value="PEP carboxykinase-like"/>
    <property type="match status" value="1"/>
</dbReference>
<name>HPRK_STAHJ</name>
<feature type="chain" id="PRO_0000058989" description="HPr kinase/phosphorylase">
    <location>
        <begin position="1"/>
        <end position="311"/>
    </location>
</feature>
<feature type="region of interest" description="Important for the catalytic mechanism of both phosphorylation and dephosphorylation" evidence="1">
    <location>
        <begin position="199"/>
        <end position="208"/>
    </location>
</feature>
<feature type="region of interest" description="Important for the catalytic mechanism of dephosphorylation" evidence="1">
    <location>
        <begin position="262"/>
        <end position="267"/>
    </location>
</feature>
<feature type="active site" evidence="1">
    <location>
        <position position="136"/>
    </location>
</feature>
<feature type="active site" evidence="1">
    <location>
        <position position="157"/>
    </location>
</feature>
<feature type="active site" description="Proton acceptor; for phosphorylation activity. Proton donor; for dephosphorylation activity" evidence="1">
    <location>
        <position position="175"/>
    </location>
</feature>
<feature type="active site" evidence="1">
    <location>
        <position position="241"/>
    </location>
</feature>
<feature type="binding site" evidence="1">
    <location>
        <begin position="151"/>
        <end position="158"/>
    </location>
    <ligand>
        <name>ATP</name>
        <dbReference type="ChEBI" id="CHEBI:30616"/>
    </ligand>
</feature>
<feature type="binding site" evidence="1">
    <location>
        <position position="158"/>
    </location>
    <ligand>
        <name>Mg(2+)</name>
        <dbReference type="ChEBI" id="CHEBI:18420"/>
    </ligand>
</feature>
<feature type="binding site" evidence="1">
    <location>
        <position position="200"/>
    </location>
    <ligand>
        <name>Mg(2+)</name>
        <dbReference type="ChEBI" id="CHEBI:18420"/>
    </ligand>
</feature>
<comment type="function">
    <text evidence="1">Catalyzes the ATP- as well as the pyrophosphate-dependent phosphorylation of a specific serine residue in HPr, a phosphocarrier protein of the phosphoenolpyruvate-dependent sugar phosphotransferase system (PTS). HprK/P also catalyzes the pyrophosphate-producing, inorganic phosphate-dependent dephosphorylation (phosphorolysis) of seryl-phosphorylated HPr (P-Ser-HPr). The two antagonistic activities of HprK/P are regulated by several intracellular metabolites, which change their concentration in response to the absence or presence of rapidly metabolisable carbon sources (glucose, fructose, etc.) in the growth medium. Therefore, by controlling the phosphorylation state of HPr, HPrK/P is a sensor enzyme that plays a major role in the regulation of carbon metabolism and sugar transport: it mediates carbon catabolite repression (CCR), and regulates PTS-catalyzed carbohydrate uptake and inducer exclusion.</text>
</comment>
<comment type="catalytic activity">
    <reaction evidence="1">
        <text>[HPr protein]-L-serine + ATP = [HPr protein]-O-phospho-L-serine + ADP + H(+)</text>
        <dbReference type="Rhea" id="RHEA:46600"/>
        <dbReference type="Rhea" id="RHEA-COMP:11602"/>
        <dbReference type="Rhea" id="RHEA-COMP:11603"/>
        <dbReference type="ChEBI" id="CHEBI:15378"/>
        <dbReference type="ChEBI" id="CHEBI:29999"/>
        <dbReference type="ChEBI" id="CHEBI:30616"/>
        <dbReference type="ChEBI" id="CHEBI:83421"/>
        <dbReference type="ChEBI" id="CHEBI:456216"/>
    </reaction>
</comment>
<comment type="catalytic activity">
    <reaction evidence="1">
        <text>[HPr protein]-O-phospho-L-serine + phosphate + H(+) = [HPr protein]-L-serine + diphosphate</text>
        <dbReference type="Rhea" id="RHEA:46604"/>
        <dbReference type="Rhea" id="RHEA-COMP:11602"/>
        <dbReference type="Rhea" id="RHEA-COMP:11603"/>
        <dbReference type="ChEBI" id="CHEBI:15378"/>
        <dbReference type="ChEBI" id="CHEBI:29999"/>
        <dbReference type="ChEBI" id="CHEBI:33019"/>
        <dbReference type="ChEBI" id="CHEBI:43474"/>
        <dbReference type="ChEBI" id="CHEBI:83421"/>
    </reaction>
</comment>
<comment type="cofactor">
    <cofactor evidence="1">
        <name>Mg(2+)</name>
        <dbReference type="ChEBI" id="CHEBI:18420"/>
    </cofactor>
</comment>
<comment type="subunit">
    <text evidence="1">Homohexamer.</text>
</comment>
<comment type="domain">
    <text evidence="1">The Walker A ATP-binding motif also binds Pi and PPi.</text>
</comment>
<comment type="miscellaneous">
    <text evidence="1">Both phosphorylation and phosphorolysis are carried out by the same active site and suggest a common mechanism for both reactions.</text>
</comment>
<comment type="similarity">
    <text evidence="1">Belongs to the HPrK/P family.</text>
</comment>
<evidence type="ECO:0000255" key="1">
    <source>
        <dbReference type="HAMAP-Rule" id="MF_01249"/>
    </source>
</evidence>
<sequence length="311" mass="34892">MLTTEKLVKLLKLELFTGEKGLHKPIKNTDISRPGLEMAGYFSHYAADRIQLLGTTELSFYNLLPDEERHGRMRKLCRPETPAIIVTRGLEPPQELIDAAQEMDTPLIVSKDATTSLMSRLTTFLEHELAKTTSLHGVLVDVYGVGVLITGDSGIGKSETALELVKRGHRLVADDNVEIREITKDELIGTPPKLIEHLLEIRGLGIINVMTLFGAGSILTQKQIRLNINLENWDKDKLYDRVGLNEETLQILDTEITKKTIPVRPGRNVAVIIEVAAMNYRLNIMGINTAEEFNQRLNEEILKKGHQSKEN</sequence>
<keyword id="KW-0067">ATP-binding</keyword>
<keyword id="KW-0119">Carbohydrate metabolism</keyword>
<keyword id="KW-0418">Kinase</keyword>
<keyword id="KW-0460">Magnesium</keyword>
<keyword id="KW-0479">Metal-binding</keyword>
<keyword id="KW-0511">Multifunctional enzyme</keyword>
<keyword id="KW-0547">Nucleotide-binding</keyword>
<keyword id="KW-0723">Serine/threonine-protein kinase</keyword>
<keyword id="KW-0808">Transferase</keyword>
<protein>
    <recommendedName>
        <fullName evidence="1">HPr kinase/phosphorylase</fullName>
        <shortName evidence="1">HPrK/P</shortName>
        <ecNumber evidence="1">2.7.11.-</ecNumber>
        <ecNumber evidence="1">2.7.4.-</ecNumber>
    </recommendedName>
    <alternativeName>
        <fullName evidence="1">HPr(Ser) kinase/phosphorylase</fullName>
    </alternativeName>
</protein>
<proteinExistence type="inferred from homology"/>
<reference key="1">
    <citation type="journal article" date="2005" name="J. Bacteriol.">
        <title>Whole-genome sequencing of Staphylococcus haemolyticus uncovers the extreme plasticity of its genome and the evolution of human-colonizing staphylococcal species.</title>
        <authorList>
            <person name="Takeuchi F."/>
            <person name="Watanabe S."/>
            <person name="Baba T."/>
            <person name="Yuzawa H."/>
            <person name="Ito T."/>
            <person name="Morimoto Y."/>
            <person name="Kuroda M."/>
            <person name="Cui L."/>
            <person name="Takahashi M."/>
            <person name="Ankai A."/>
            <person name="Baba S."/>
            <person name="Fukui S."/>
            <person name="Lee J.C."/>
            <person name="Hiramatsu K."/>
        </authorList>
    </citation>
    <scope>NUCLEOTIDE SEQUENCE [LARGE SCALE GENOMIC DNA]</scope>
    <source>
        <strain>JCSC1435</strain>
    </source>
</reference>
<organism>
    <name type="scientific">Staphylococcus haemolyticus (strain JCSC1435)</name>
    <dbReference type="NCBI Taxonomy" id="279808"/>
    <lineage>
        <taxon>Bacteria</taxon>
        <taxon>Bacillati</taxon>
        <taxon>Bacillota</taxon>
        <taxon>Bacilli</taxon>
        <taxon>Bacillales</taxon>
        <taxon>Staphylococcaceae</taxon>
        <taxon>Staphylococcus</taxon>
    </lineage>
</organism>
<accession>Q4L4I7</accession>
<gene>
    <name evidence="1" type="primary">hprK</name>
    <name type="ordered locus">SH2129</name>
</gene>